<gene>
    <name evidence="1" type="primary">mnmG</name>
    <name evidence="1" type="synonym">gidA</name>
    <name type="ordered locus">Acry_2406</name>
</gene>
<accession>A5G168</accession>
<organism>
    <name type="scientific">Acidiphilium cryptum (strain JF-5)</name>
    <dbReference type="NCBI Taxonomy" id="349163"/>
    <lineage>
        <taxon>Bacteria</taxon>
        <taxon>Pseudomonadati</taxon>
        <taxon>Pseudomonadota</taxon>
        <taxon>Alphaproteobacteria</taxon>
        <taxon>Acetobacterales</taxon>
        <taxon>Acidocellaceae</taxon>
        <taxon>Acidiphilium</taxon>
    </lineage>
</organism>
<evidence type="ECO:0000255" key="1">
    <source>
        <dbReference type="HAMAP-Rule" id="MF_00129"/>
    </source>
</evidence>
<comment type="function">
    <text evidence="1">NAD-binding protein involved in the addition of a carboxymethylaminomethyl (cmnm) group at the wobble position (U34) of certain tRNAs, forming tRNA-cmnm(5)s(2)U34.</text>
</comment>
<comment type="cofactor">
    <cofactor evidence="1">
        <name>FAD</name>
        <dbReference type="ChEBI" id="CHEBI:57692"/>
    </cofactor>
</comment>
<comment type="subunit">
    <text evidence="1">Homodimer. Heterotetramer of two MnmE and two MnmG subunits.</text>
</comment>
<comment type="subcellular location">
    <subcellularLocation>
        <location evidence="1">Cytoplasm</location>
    </subcellularLocation>
</comment>
<comment type="similarity">
    <text evidence="1">Belongs to the MnmG family.</text>
</comment>
<keyword id="KW-0963">Cytoplasm</keyword>
<keyword id="KW-0274">FAD</keyword>
<keyword id="KW-0285">Flavoprotein</keyword>
<keyword id="KW-0520">NAD</keyword>
<keyword id="KW-1185">Reference proteome</keyword>
<keyword id="KW-0819">tRNA processing</keyword>
<name>MNMG_ACICJ</name>
<dbReference type="EMBL" id="CP000697">
    <property type="protein sequence ID" value="ABQ31600.1"/>
    <property type="molecule type" value="Genomic_DNA"/>
</dbReference>
<dbReference type="RefSeq" id="WP_012040033.1">
    <property type="nucleotide sequence ID" value="NC_009484.1"/>
</dbReference>
<dbReference type="SMR" id="A5G168"/>
<dbReference type="STRING" id="349163.Acry_2406"/>
<dbReference type="KEGG" id="acr:Acry_2406"/>
<dbReference type="eggNOG" id="COG0445">
    <property type="taxonomic scope" value="Bacteria"/>
</dbReference>
<dbReference type="HOGENOM" id="CLU_007831_2_2_5"/>
<dbReference type="Proteomes" id="UP000000245">
    <property type="component" value="Chromosome"/>
</dbReference>
<dbReference type="GO" id="GO:0005829">
    <property type="term" value="C:cytosol"/>
    <property type="evidence" value="ECO:0007669"/>
    <property type="project" value="TreeGrafter"/>
</dbReference>
<dbReference type="GO" id="GO:0050660">
    <property type="term" value="F:flavin adenine dinucleotide binding"/>
    <property type="evidence" value="ECO:0007669"/>
    <property type="project" value="UniProtKB-UniRule"/>
</dbReference>
<dbReference type="GO" id="GO:0030488">
    <property type="term" value="P:tRNA methylation"/>
    <property type="evidence" value="ECO:0007669"/>
    <property type="project" value="TreeGrafter"/>
</dbReference>
<dbReference type="GO" id="GO:0002098">
    <property type="term" value="P:tRNA wobble uridine modification"/>
    <property type="evidence" value="ECO:0007669"/>
    <property type="project" value="InterPro"/>
</dbReference>
<dbReference type="FunFam" id="3.50.50.60:FF:000002">
    <property type="entry name" value="tRNA uridine 5-carboxymethylaminomethyl modification enzyme MnmG"/>
    <property type="match status" value="1"/>
</dbReference>
<dbReference type="Gene3D" id="3.50.50.60">
    <property type="entry name" value="FAD/NAD(P)-binding domain"/>
    <property type="match status" value="2"/>
</dbReference>
<dbReference type="Gene3D" id="1.10.150.570">
    <property type="entry name" value="GidA associated domain, C-terminal subdomain"/>
    <property type="match status" value="1"/>
</dbReference>
<dbReference type="HAMAP" id="MF_00129">
    <property type="entry name" value="MnmG_GidA"/>
    <property type="match status" value="1"/>
</dbReference>
<dbReference type="InterPro" id="IPR036188">
    <property type="entry name" value="FAD/NAD-bd_sf"/>
</dbReference>
<dbReference type="InterPro" id="IPR004416">
    <property type="entry name" value="MnmG"/>
</dbReference>
<dbReference type="InterPro" id="IPR002218">
    <property type="entry name" value="MnmG-rel"/>
</dbReference>
<dbReference type="InterPro" id="IPR020595">
    <property type="entry name" value="MnmG-rel_CS"/>
</dbReference>
<dbReference type="InterPro" id="IPR026904">
    <property type="entry name" value="MnmG_C"/>
</dbReference>
<dbReference type="InterPro" id="IPR047001">
    <property type="entry name" value="MnmG_C_subdom"/>
</dbReference>
<dbReference type="InterPro" id="IPR044920">
    <property type="entry name" value="MnmG_C_subdom_sf"/>
</dbReference>
<dbReference type="InterPro" id="IPR040131">
    <property type="entry name" value="MnmG_N"/>
</dbReference>
<dbReference type="NCBIfam" id="TIGR00136">
    <property type="entry name" value="mnmG_gidA"/>
    <property type="match status" value="1"/>
</dbReference>
<dbReference type="PANTHER" id="PTHR11806">
    <property type="entry name" value="GLUCOSE INHIBITED DIVISION PROTEIN A"/>
    <property type="match status" value="1"/>
</dbReference>
<dbReference type="PANTHER" id="PTHR11806:SF0">
    <property type="entry name" value="PROTEIN MTO1 HOMOLOG, MITOCHONDRIAL"/>
    <property type="match status" value="1"/>
</dbReference>
<dbReference type="Pfam" id="PF01134">
    <property type="entry name" value="GIDA"/>
    <property type="match status" value="1"/>
</dbReference>
<dbReference type="Pfam" id="PF13932">
    <property type="entry name" value="SAM_GIDA_C"/>
    <property type="match status" value="1"/>
</dbReference>
<dbReference type="SMART" id="SM01228">
    <property type="entry name" value="GIDA_assoc_3"/>
    <property type="match status" value="1"/>
</dbReference>
<dbReference type="SUPFAM" id="SSF51905">
    <property type="entry name" value="FAD/NAD(P)-binding domain"/>
    <property type="match status" value="1"/>
</dbReference>
<dbReference type="PROSITE" id="PS01280">
    <property type="entry name" value="GIDA_1"/>
    <property type="match status" value="1"/>
</dbReference>
<dbReference type="PROSITE" id="PS01281">
    <property type="entry name" value="GIDA_2"/>
    <property type="match status" value="1"/>
</dbReference>
<sequence length="576" mass="60999">MTSLREMFDVVVIGGGHAGTEAAAAAARMGARTALLTHRRDRIGEMSCNPAIGGIGKGHLVREIDALDGVMGRAADAACIHFKMLNRSKGPAVWGPRAQADRGLYRAAVQALLAAQDGLTILEGEAADLELTADGALAAVITGAGGRIACRAAVLTTGTFLRGVLHFGERTEEGGRVGDAASNALSARLRGLGLALGRLKTGTPARLDRRSIDWEALPEDRGEAEPAPFSLLTGRIANPQISCRISETTPETHAIINANLHRSAVYGGRIDGAGPRYCPSIEDKVVRFAERPRHQVFLEPEGLEDETVYPNGISTSLPEEVQEAFIRTMPGLSRAVLLRPGYAVEYDYVDPRELTHALALKKVPGLFLAGQINGTTGYEEAGAQGLLAGVNAALVAAGRSMVTVRRHEGYIGVLVDDLVTRGVSEPYRMFTSRAEHRLSLRADNADLRLTPRGLDWGCVGPARQAAFAALAAAVATVRDGGAGSEQAAAIVAADRLYEGYLTRQESEIRARAKDDAVLIPPDFDFSVVGGLSAEIRARLERVRPETLGVAGRLEGMTPAALGALFAALRRPRPLAA</sequence>
<proteinExistence type="inferred from homology"/>
<reference key="1">
    <citation type="submission" date="2007-05" db="EMBL/GenBank/DDBJ databases">
        <title>Complete sequence of chromosome of Acidiphilium cryptum JF-5.</title>
        <authorList>
            <consortium name="US DOE Joint Genome Institute"/>
            <person name="Copeland A."/>
            <person name="Lucas S."/>
            <person name="Lapidus A."/>
            <person name="Barry K."/>
            <person name="Detter J.C."/>
            <person name="Glavina del Rio T."/>
            <person name="Hammon N."/>
            <person name="Israni S."/>
            <person name="Dalin E."/>
            <person name="Tice H."/>
            <person name="Pitluck S."/>
            <person name="Sims D."/>
            <person name="Brettin T."/>
            <person name="Bruce D."/>
            <person name="Han C."/>
            <person name="Schmutz J."/>
            <person name="Larimer F."/>
            <person name="Land M."/>
            <person name="Hauser L."/>
            <person name="Kyrpides N."/>
            <person name="Kim E."/>
            <person name="Magnuson T."/>
            <person name="Richardson P."/>
        </authorList>
    </citation>
    <scope>NUCLEOTIDE SEQUENCE [LARGE SCALE GENOMIC DNA]</scope>
    <source>
        <strain>JF-5</strain>
    </source>
</reference>
<feature type="chain" id="PRO_0000345233" description="tRNA uridine 5-carboxymethylaminomethyl modification enzyme MnmG">
    <location>
        <begin position="1"/>
        <end position="576"/>
    </location>
</feature>
<feature type="binding site" evidence="1">
    <location>
        <begin position="14"/>
        <end position="19"/>
    </location>
    <ligand>
        <name>FAD</name>
        <dbReference type="ChEBI" id="CHEBI:57692"/>
    </ligand>
</feature>
<feature type="binding site" evidence="1">
    <location>
        <begin position="274"/>
        <end position="288"/>
    </location>
    <ligand>
        <name>NAD(+)</name>
        <dbReference type="ChEBI" id="CHEBI:57540"/>
    </ligand>
</feature>
<protein>
    <recommendedName>
        <fullName evidence="1">tRNA uridine 5-carboxymethylaminomethyl modification enzyme MnmG</fullName>
    </recommendedName>
    <alternativeName>
        <fullName evidence="1">Glucose-inhibited division protein A</fullName>
    </alternativeName>
</protein>